<comment type="similarity">
    <text evidence="2">Belongs to the UDPGP type 1 family.</text>
</comment>
<accession>Q4L846</accession>
<gene>
    <name type="ordered locus">SH0870</name>
</gene>
<feature type="chain" id="PRO_0000271317" description="Probable uridylyltransferase SH0870">
    <location>
        <begin position="1"/>
        <end position="395"/>
    </location>
</feature>
<feature type="binding site" evidence="1">
    <location>
        <begin position="99"/>
        <end position="102"/>
    </location>
    <ligand>
        <name>UTP</name>
        <dbReference type="ChEBI" id="CHEBI:46398"/>
    </ligand>
</feature>
<feature type="binding site" evidence="1">
    <location>
        <position position="113"/>
    </location>
    <ligand>
        <name>UTP</name>
        <dbReference type="ChEBI" id="CHEBI:46398"/>
    </ligand>
</feature>
<feature type="binding site" evidence="1">
    <location>
        <position position="178"/>
    </location>
    <ligand>
        <name>UTP</name>
        <dbReference type="ChEBI" id="CHEBI:46398"/>
    </ligand>
</feature>
<feature type="binding site" evidence="1">
    <location>
        <position position="204"/>
    </location>
    <ligand>
        <name>UTP</name>
        <dbReference type="ChEBI" id="CHEBI:46398"/>
    </ligand>
</feature>
<feature type="binding site" evidence="1">
    <location>
        <position position="235"/>
    </location>
    <ligand>
        <name>UTP</name>
        <dbReference type="ChEBI" id="CHEBI:46398"/>
    </ligand>
</feature>
<feature type="binding site" evidence="1">
    <location>
        <position position="344"/>
    </location>
    <ligand>
        <name>UTP</name>
        <dbReference type="ChEBI" id="CHEBI:46398"/>
    </ligand>
</feature>
<proteinExistence type="inferred from homology"/>
<keyword id="KW-0548">Nucleotidyltransferase</keyword>
<keyword id="KW-0808">Transferase</keyword>
<reference key="1">
    <citation type="journal article" date="2005" name="J. Bacteriol.">
        <title>Whole-genome sequencing of Staphylococcus haemolyticus uncovers the extreme plasticity of its genome and the evolution of human-colonizing staphylococcal species.</title>
        <authorList>
            <person name="Takeuchi F."/>
            <person name="Watanabe S."/>
            <person name="Baba T."/>
            <person name="Yuzawa H."/>
            <person name="Ito T."/>
            <person name="Morimoto Y."/>
            <person name="Kuroda M."/>
            <person name="Cui L."/>
            <person name="Takahashi M."/>
            <person name="Ankai A."/>
            <person name="Baba S."/>
            <person name="Fukui S."/>
            <person name="Lee J.C."/>
            <person name="Hiramatsu K."/>
        </authorList>
    </citation>
    <scope>NUCLEOTIDE SEQUENCE [LARGE SCALE GENOMIC DNA]</scope>
    <source>
        <strain>JCSC1435</strain>
    </source>
</reference>
<dbReference type="EC" id="2.7.7.-"/>
<dbReference type="EMBL" id="AP006716">
    <property type="protein sequence ID" value="BAE04179.1"/>
    <property type="molecule type" value="Genomic_DNA"/>
</dbReference>
<dbReference type="RefSeq" id="WP_011275182.1">
    <property type="nucleotide sequence ID" value="NC_007168.1"/>
</dbReference>
<dbReference type="SMR" id="Q4L846"/>
<dbReference type="KEGG" id="sha:SH0870"/>
<dbReference type="eggNOG" id="COG4284">
    <property type="taxonomic scope" value="Bacteria"/>
</dbReference>
<dbReference type="HOGENOM" id="CLU_025603_1_2_9"/>
<dbReference type="OrthoDB" id="9806910at2"/>
<dbReference type="Proteomes" id="UP000000543">
    <property type="component" value="Chromosome"/>
</dbReference>
<dbReference type="GO" id="GO:0070569">
    <property type="term" value="F:uridylyltransferase activity"/>
    <property type="evidence" value="ECO:0007669"/>
    <property type="project" value="InterPro"/>
</dbReference>
<dbReference type="CDD" id="cd04193">
    <property type="entry name" value="UDPGlcNAc_PPase"/>
    <property type="match status" value="1"/>
</dbReference>
<dbReference type="Gene3D" id="3.90.550.10">
    <property type="entry name" value="Spore Coat Polysaccharide Biosynthesis Protein SpsA, Chain A"/>
    <property type="match status" value="1"/>
</dbReference>
<dbReference type="InterPro" id="IPR029044">
    <property type="entry name" value="Nucleotide-diphossugar_trans"/>
</dbReference>
<dbReference type="InterPro" id="IPR039741">
    <property type="entry name" value="UDP-sugar_pyrophosphorylase"/>
</dbReference>
<dbReference type="InterPro" id="IPR002618">
    <property type="entry name" value="UDPGP_fam"/>
</dbReference>
<dbReference type="PANTHER" id="PTHR11952:SF2">
    <property type="entry name" value="LD24639P"/>
    <property type="match status" value="1"/>
</dbReference>
<dbReference type="PANTHER" id="PTHR11952">
    <property type="entry name" value="UDP- GLUCOSE PYROPHOSPHORYLASE"/>
    <property type="match status" value="1"/>
</dbReference>
<dbReference type="Pfam" id="PF01704">
    <property type="entry name" value="UDPGP"/>
    <property type="match status" value="1"/>
</dbReference>
<dbReference type="SUPFAM" id="SSF53448">
    <property type="entry name" value="Nucleotide-diphospho-sugar transferases"/>
    <property type="match status" value="1"/>
</dbReference>
<evidence type="ECO:0000250" key="1">
    <source>
        <dbReference type="UniProtKB" id="Q9M9P3"/>
    </source>
</evidence>
<evidence type="ECO:0000305" key="2"/>
<organism>
    <name type="scientific">Staphylococcus haemolyticus (strain JCSC1435)</name>
    <dbReference type="NCBI Taxonomy" id="279808"/>
    <lineage>
        <taxon>Bacteria</taxon>
        <taxon>Bacillati</taxon>
        <taxon>Bacillota</taxon>
        <taxon>Bacilli</taxon>
        <taxon>Bacillales</taxon>
        <taxon>Staphylococcaceae</taxon>
        <taxon>Staphylococcus</taxon>
    </lineage>
</organism>
<protein>
    <recommendedName>
        <fullName>Probable uridylyltransferase SH0870</fullName>
        <ecNumber>2.7.7.-</ecNumber>
    </recommendedName>
</protein>
<name>URTF_STAHJ</name>
<sequence>MLDQNQLKKYNQEHLSEYEKLMSSNEKEKLESKVNELDLESIQQLFQDLYVNRQSISDVSSVSEVKYQRKTELTDQEGAKYEQKGIEAIRNGEFAVLLMAGGQGTRLGYKGPKGSFEIKGVSLFELQARQLLKLKKETGHLINWYIMTSDINHEETLSYFEQHDYFGYNPDNVHFFKQENMVALCETGQLVLNEQGYIMETPNGNGGVFKSLEKNGYLDKMASDGVKFIFLNNIDNVLVKVLDPLFAGFTVVNDCDVTSKSIQPKDGESVGRLVNQNSKDTVLEYSELDEAVANTFDNANIGIHAFKVAFIKQAVNNDLPYHLAVKKLKQLDEDFGVVEKPTLKFELFYFDIFRYATSFVTLQVNREDEFSPLKNKEGKDSVETATSDLERLNLI</sequence>